<protein>
    <recommendedName>
        <fullName evidence="4">LSM1-LSM7 complex subunit lsm1</fullName>
    </recommendedName>
</protein>
<feature type="chain" id="PRO_0000125590" description="LSM1-LSM7 complex subunit lsm1">
    <location>
        <begin position="1"/>
        <end position="140"/>
    </location>
</feature>
<feature type="domain" description="Sm" evidence="2">
    <location>
        <begin position="11"/>
        <end position="86"/>
    </location>
</feature>
<feature type="region of interest" description="Confers RNA-binding specificity" evidence="3">
    <location>
        <begin position="129"/>
        <end position="140"/>
    </location>
</feature>
<feature type="helix" evidence="7">
    <location>
        <begin position="16"/>
        <end position="19"/>
    </location>
</feature>
<feature type="strand" evidence="7">
    <location>
        <begin position="22"/>
        <end position="28"/>
    </location>
</feature>
<feature type="strand" evidence="7">
    <location>
        <begin position="33"/>
        <end position="41"/>
    </location>
</feature>
<feature type="strand" evidence="7">
    <location>
        <begin position="47"/>
        <end position="58"/>
    </location>
</feature>
<feature type="strand" evidence="7">
    <location>
        <begin position="61"/>
        <end position="72"/>
    </location>
</feature>
<feature type="helix" evidence="7">
    <location>
        <begin position="74"/>
        <end position="76"/>
    </location>
</feature>
<feature type="strand" evidence="7">
    <location>
        <begin position="77"/>
        <end position="82"/>
    </location>
</feature>
<proteinExistence type="evidence at protein level"/>
<organism>
    <name type="scientific">Schizosaccharomyces pombe (strain 972 / ATCC 24843)</name>
    <name type="common">Fission yeast</name>
    <dbReference type="NCBI Taxonomy" id="284812"/>
    <lineage>
        <taxon>Eukaryota</taxon>
        <taxon>Fungi</taxon>
        <taxon>Dikarya</taxon>
        <taxon>Ascomycota</taxon>
        <taxon>Taphrinomycotina</taxon>
        <taxon>Schizosaccharomycetes</taxon>
        <taxon>Schizosaccharomycetales</taxon>
        <taxon>Schizosaccharomycetaceae</taxon>
        <taxon>Schizosaccharomyces</taxon>
    </lineage>
</organism>
<sequence>MNQATQIIPFTTSGSLVDYVDRKVIVVLRDGKKLIGILRSFDQFANLMLQYTIERIYVDDMYGDIDRGVYIVRGENVVLLGELDLDKEYDAVKQLRRMPAEELYPLAKLHEEEKKKNIREKGKYLHSVGFSVDGGHDDLY</sequence>
<dbReference type="EMBL" id="CU329671">
    <property type="protein sequence ID" value="CAB09117.1"/>
    <property type="molecule type" value="Genomic_DNA"/>
</dbReference>
<dbReference type="PIR" id="T40368">
    <property type="entry name" value="T40368"/>
</dbReference>
<dbReference type="RefSeq" id="NP_595520.1">
    <property type="nucleotide sequence ID" value="NM_001021429.2"/>
</dbReference>
<dbReference type="PDB" id="6PPQ">
    <property type="method" value="X-ray"/>
    <property type="resolution" value="1.81 A"/>
    <property type="chains" value="A=1-84"/>
</dbReference>
<dbReference type="PDB" id="6PPV">
    <property type="method" value="X-ray"/>
    <property type="resolution" value="2.05 A"/>
    <property type="chains" value="A=1-84"/>
</dbReference>
<dbReference type="PDBsum" id="6PPQ"/>
<dbReference type="PDBsum" id="6PPV"/>
<dbReference type="SMR" id="P87173"/>
<dbReference type="BioGRID" id="277048">
    <property type="interactions" value="2"/>
</dbReference>
<dbReference type="FunCoup" id="P87173">
    <property type="interactions" value="298"/>
</dbReference>
<dbReference type="STRING" id="284812.P87173"/>
<dbReference type="PaxDb" id="4896-SPBC3D6.08c.1"/>
<dbReference type="EnsemblFungi" id="SPBC3D6.08c.1">
    <property type="protein sequence ID" value="SPBC3D6.08c.1:pep"/>
    <property type="gene ID" value="SPBC3D6.08c"/>
</dbReference>
<dbReference type="GeneID" id="2540520"/>
<dbReference type="KEGG" id="spo:2540520"/>
<dbReference type="PomBase" id="SPBC3D6.08c">
    <property type="gene designation" value="lsm1"/>
</dbReference>
<dbReference type="VEuPathDB" id="FungiDB:SPBC3D6.08c"/>
<dbReference type="eggNOG" id="KOG1782">
    <property type="taxonomic scope" value="Eukaryota"/>
</dbReference>
<dbReference type="HOGENOM" id="CLU_076902_0_1_1"/>
<dbReference type="InParanoid" id="P87173"/>
<dbReference type="OMA" id="DQFANLM"/>
<dbReference type="PhylomeDB" id="P87173"/>
<dbReference type="Reactome" id="R-SPO-430039">
    <property type="pathway name" value="mRNA decay by 5' to 3' exoribonuclease"/>
</dbReference>
<dbReference type="CD-CODE" id="0808F6DD">
    <property type="entry name" value="P-body"/>
</dbReference>
<dbReference type="PRO" id="PR:P87173"/>
<dbReference type="Proteomes" id="UP000002485">
    <property type="component" value="Chromosome II"/>
</dbReference>
<dbReference type="GO" id="GO:0005737">
    <property type="term" value="C:cytoplasm"/>
    <property type="evidence" value="ECO:0000314"/>
    <property type="project" value="PomBase"/>
</dbReference>
<dbReference type="GO" id="GO:0005829">
    <property type="term" value="C:cytosol"/>
    <property type="evidence" value="ECO:0007005"/>
    <property type="project" value="PomBase"/>
</dbReference>
<dbReference type="GO" id="GO:1990726">
    <property type="term" value="C:Lsm1-7-Pat1 complex"/>
    <property type="evidence" value="ECO:0000269"/>
    <property type="project" value="PomBase"/>
</dbReference>
<dbReference type="GO" id="GO:0005634">
    <property type="term" value="C:nucleus"/>
    <property type="evidence" value="ECO:0007005"/>
    <property type="project" value="PomBase"/>
</dbReference>
<dbReference type="GO" id="GO:0000932">
    <property type="term" value="C:P-body"/>
    <property type="evidence" value="ECO:0000318"/>
    <property type="project" value="GO_Central"/>
</dbReference>
<dbReference type="GO" id="GO:1990904">
    <property type="term" value="C:ribonucleoprotein complex"/>
    <property type="evidence" value="ECO:0007669"/>
    <property type="project" value="UniProtKB-KW"/>
</dbReference>
<dbReference type="GO" id="GO:0035925">
    <property type="term" value="F:mRNA 3'-UTR AU-rich region binding"/>
    <property type="evidence" value="ECO:0000269"/>
    <property type="project" value="PomBase"/>
</dbReference>
<dbReference type="GO" id="GO:0003729">
    <property type="term" value="F:mRNA binding"/>
    <property type="evidence" value="ECO:0000318"/>
    <property type="project" value="GO_Central"/>
</dbReference>
<dbReference type="GO" id="GO:0008266">
    <property type="term" value="F:poly(U) RNA binding"/>
    <property type="evidence" value="ECO:0000269"/>
    <property type="project" value="PomBase"/>
</dbReference>
<dbReference type="GO" id="GO:0035613">
    <property type="term" value="F:RNA stem-loop binding"/>
    <property type="evidence" value="ECO:0000269"/>
    <property type="project" value="PomBase"/>
</dbReference>
<dbReference type="GO" id="GO:0000290">
    <property type="term" value="P:deadenylation-dependent decapping of nuclear-transcribed mRNA"/>
    <property type="evidence" value="ECO:0000318"/>
    <property type="project" value="GO_Central"/>
</dbReference>
<dbReference type="GO" id="GO:0006397">
    <property type="term" value="P:mRNA processing"/>
    <property type="evidence" value="ECO:0007669"/>
    <property type="project" value="UniProtKB-KW"/>
</dbReference>
<dbReference type="GO" id="GO:0008380">
    <property type="term" value="P:RNA splicing"/>
    <property type="evidence" value="ECO:0007669"/>
    <property type="project" value="UniProtKB-KW"/>
</dbReference>
<dbReference type="CDD" id="cd01728">
    <property type="entry name" value="LSm1"/>
    <property type="match status" value="1"/>
</dbReference>
<dbReference type="FunFam" id="2.30.30.100:FF:000029">
    <property type="entry name" value="U6 snRNA-associated Sm-like protein LSm1"/>
    <property type="match status" value="1"/>
</dbReference>
<dbReference type="Gene3D" id="2.30.30.100">
    <property type="match status" value="1"/>
</dbReference>
<dbReference type="InterPro" id="IPR034104">
    <property type="entry name" value="Lsm1"/>
</dbReference>
<dbReference type="InterPro" id="IPR010920">
    <property type="entry name" value="LSM_dom_sf"/>
</dbReference>
<dbReference type="InterPro" id="IPR044642">
    <property type="entry name" value="PTHR15588"/>
</dbReference>
<dbReference type="InterPro" id="IPR047575">
    <property type="entry name" value="Sm"/>
</dbReference>
<dbReference type="InterPro" id="IPR001163">
    <property type="entry name" value="Sm_dom_euk/arc"/>
</dbReference>
<dbReference type="PANTHER" id="PTHR15588">
    <property type="entry name" value="LSM1"/>
    <property type="match status" value="1"/>
</dbReference>
<dbReference type="PANTHER" id="PTHR15588:SF8">
    <property type="entry name" value="U6 SNRNA-ASSOCIATED SM-LIKE PROTEIN LSM1"/>
    <property type="match status" value="1"/>
</dbReference>
<dbReference type="Pfam" id="PF01423">
    <property type="entry name" value="LSM"/>
    <property type="match status" value="1"/>
</dbReference>
<dbReference type="SMART" id="SM00651">
    <property type="entry name" value="Sm"/>
    <property type="match status" value="1"/>
</dbReference>
<dbReference type="SUPFAM" id="SSF50182">
    <property type="entry name" value="Sm-like ribonucleoproteins"/>
    <property type="match status" value="1"/>
</dbReference>
<dbReference type="PROSITE" id="PS52002">
    <property type="entry name" value="SM"/>
    <property type="match status" value="1"/>
</dbReference>
<gene>
    <name type="primary">lsm1</name>
    <name type="ORF">SPBC3D6.08c</name>
</gene>
<keyword id="KW-0002">3D-structure</keyword>
<keyword id="KW-0963">Cytoplasm</keyword>
<keyword id="KW-0507">mRNA processing</keyword>
<keyword id="KW-0508">mRNA splicing</keyword>
<keyword id="KW-0539">Nucleus</keyword>
<keyword id="KW-1185">Reference proteome</keyword>
<keyword id="KW-0687">Ribonucleoprotein</keyword>
<keyword id="KW-0694">RNA-binding</keyword>
<reference key="1">
    <citation type="journal article" date="2002" name="Nature">
        <title>The genome sequence of Schizosaccharomyces pombe.</title>
        <authorList>
            <person name="Wood V."/>
            <person name="Gwilliam R."/>
            <person name="Rajandream M.A."/>
            <person name="Lyne M.H."/>
            <person name="Lyne R."/>
            <person name="Stewart A."/>
            <person name="Sgouros J.G."/>
            <person name="Peat N."/>
            <person name="Hayles J."/>
            <person name="Baker S.G."/>
            <person name="Basham D."/>
            <person name="Bowman S."/>
            <person name="Brooks K."/>
            <person name="Brown D."/>
            <person name="Brown S."/>
            <person name="Chillingworth T."/>
            <person name="Churcher C.M."/>
            <person name="Collins M."/>
            <person name="Connor R."/>
            <person name="Cronin A."/>
            <person name="Davis P."/>
            <person name="Feltwell T."/>
            <person name="Fraser A."/>
            <person name="Gentles S."/>
            <person name="Goble A."/>
            <person name="Hamlin N."/>
            <person name="Harris D.E."/>
            <person name="Hidalgo J."/>
            <person name="Hodgson G."/>
            <person name="Holroyd S."/>
            <person name="Hornsby T."/>
            <person name="Howarth S."/>
            <person name="Huckle E.J."/>
            <person name="Hunt S."/>
            <person name="Jagels K."/>
            <person name="James K.D."/>
            <person name="Jones L."/>
            <person name="Jones M."/>
            <person name="Leather S."/>
            <person name="McDonald S."/>
            <person name="McLean J."/>
            <person name="Mooney P."/>
            <person name="Moule S."/>
            <person name="Mungall K.L."/>
            <person name="Murphy L.D."/>
            <person name="Niblett D."/>
            <person name="Odell C."/>
            <person name="Oliver K."/>
            <person name="O'Neil S."/>
            <person name="Pearson D."/>
            <person name="Quail M.A."/>
            <person name="Rabbinowitsch E."/>
            <person name="Rutherford K.M."/>
            <person name="Rutter S."/>
            <person name="Saunders D."/>
            <person name="Seeger K."/>
            <person name="Sharp S."/>
            <person name="Skelton J."/>
            <person name="Simmonds M.N."/>
            <person name="Squares R."/>
            <person name="Squares S."/>
            <person name="Stevens K."/>
            <person name="Taylor K."/>
            <person name="Taylor R.G."/>
            <person name="Tivey A."/>
            <person name="Walsh S.V."/>
            <person name="Warren T."/>
            <person name="Whitehead S."/>
            <person name="Woodward J.R."/>
            <person name="Volckaert G."/>
            <person name="Aert R."/>
            <person name="Robben J."/>
            <person name="Grymonprez B."/>
            <person name="Weltjens I."/>
            <person name="Vanstreels E."/>
            <person name="Rieger M."/>
            <person name="Schaefer M."/>
            <person name="Mueller-Auer S."/>
            <person name="Gabel C."/>
            <person name="Fuchs M."/>
            <person name="Duesterhoeft A."/>
            <person name="Fritzc C."/>
            <person name="Holzer E."/>
            <person name="Moestl D."/>
            <person name="Hilbert H."/>
            <person name="Borzym K."/>
            <person name="Langer I."/>
            <person name="Beck A."/>
            <person name="Lehrach H."/>
            <person name="Reinhardt R."/>
            <person name="Pohl T.M."/>
            <person name="Eger P."/>
            <person name="Zimmermann W."/>
            <person name="Wedler H."/>
            <person name="Wambutt R."/>
            <person name="Purnelle B."/>
            <person name="Goffeau A."/>
            <person name="Cadieu E."/>
            <person name="Dreano S."/>
            <person name="Gloux S."/>
            <person name="Lelaure V."/>
            <person name="Mottier S."/>
            <person name="Galibert F."/>
            <person name="Aves S.J."/>
            <person name="Xiang Z."/>
            <person name="Hunt C."/>
            <person name="Moore K."/>
            <person name="Hurst S.M."/>
            <person name="Lucas M."/>
            <person name="Rochet M."/>
            <person name="Gaillardin C."/>
            <person name="Tallada V.A."/>
            <person name="Garzon A."/>
            <person name="Thode G."/>
            <person name="Daga R.R."/>
            <person name="Cruzado L."/>
            <person name="Jimenez J."/>
            <person name="Sanchez M."/>
            <person name="del Rey F."/>
            <person name="Benito J."/>
            <person name="Dominguez A."/>
            <person name="Revuelta J.L."/>
            <person name="Moreno S."/>
            <person name="Armstrong J."/>
            <person name="Forsburg S.L."/>
            <person name="Cerutti L."/>
            <person name="Lowe T."/>
            <person name="McCombie W.R."/>
            <person name="Paulsen I."/>
            <person name="Potashkin J."/>
            <person name="Shpakovski G.V."/>
            <person name="Ussery D."/>
            <person name="Barrell B.G."/>
            <person name="Nurse P."/>
        </authorList>
    </citation>
    <scope>NUCLEOTIDE SEQUENCE [LARGE SCALE GENOMIC DNA]</scope>
    <source>
        <strain>972 / ATCC 24843</strain>
    </source>
</reference>
<reference evidence="5 6" key="2">
    <citation type="journal article" date="2020" name="RNA">
        <title>Molecular basis for the distinct cellular functions of the Lsm1-7 and Lsm2-8 complexes.</title>
        <authorList>
            <person name="Montemayor E.J."/>
            <person name="Virta J.M."/>
            <person name="Hayes S.M."/>
            <person name="Nomura Y."/>
            <person name="Brow D.A."/>
            <person name="Butcher S.E."/>
        </authorList>
    </citation>
    <scope>X-RAY CRYSTALLOGRAPHY (1.81 ANGSTROMS) OF 1-84 IN COMPLEX WITH RNA</scope>
    <scope>FUNCTION</scope>
    <scope>SUBUNIT</scope>
    <scope>IDENTIFICATION IN THE LSM1-LSM7 COMPLEX</scope>
</reference>
<comment type="function">
    <text evidence="3">Component of the cytoplasmic LSM1-LSM7 complex which is involved in mRNA degradation by activating the decapping step (PubMed:32518066). The LSM1-LSM7 complex loads onto the 3'-end of single stranded RNA (PubMed:32518066).</text>
</comment>
<comment type="subunit">
    <text evidence="3">Component of the heptameric LSM1-LSM7 complex that forms a seven-membered ring structure with a donut shape (PubMed:32518066). The LSm subunits are arranged in the order lsm1, lsm2, lsm3, lsm6, lsm5, lsm7 and lsm4 (PubMed:32518066).</text>
</comment>
<comment type="subcellular location">
    <subcellularLocation>
        <location evidence="1">Nucleus</location>
    </subcellularLocation>
    <subcellularLocation>
        <location evidence="1">Cytoplasm</location>
    </subcellularLocation>
    <subcellularLocation>
        <location evidence="1">Cytoplasm</location>
        <location evidence="1">P-body</location>
    </subcellularLocation>
</comment>
<comment type="similarity">
    <text evidence="4">Belongs to the snRNP Sm proteins family.</text>
</comment>
<accession>P87173</accession>
<evidence type="ECO:0000250" key="1">
    <source>
        <dbReference type="UniProtKB" id="P47017"/>
    </source>
</evidence>
<evidence type="ECO:0000255" key="2">
    <source>
        <dbReference type="PROSITE-ProRule" id="PRU01346"/>
    </source>
</evidence>
<evidence type="ECO:0000269" key="3">
    <source>
    </source>
</evidence>
<evidence type="ECO:0000305" key="4"/>
<evidence type="ECO:0007744" key="5">
    <source>
        <dbReference type="PDB" id="6PPQ"/>
    </source>
</evidence>
<evidence type="ECO:0007744" key="6">
    <source>
        <dbReference type="PDB" id="6PPV"/>
    </source>
</evidence>
<evidence type="ECO:0007829" key="7">
    <source>
        <dbReference type="PDB" id="6PPQ"/>
    </source>
</evidence>
<name>LSM1_SCHPO</name>